<feature type="chain" id="PRO_0000369573" description="Ribosome biogenesis protein YTM1">
    <location>
        <begin position="1"/>
        <end position="445"/>
    </location>
</feature>
<feature type="repeat" description="WD 1">
    <location>
        <begin position="101"/>
        <end position="138"/>
    </location>
</feature>
<feature type="repeat" description="WD 2">
    <location>
        <begin position="140"/>
        <end position="178"/>
    </location>
</feature>
<feature type="repeat" description="WD 3">
    <location>
        <begin position="195"/>
        <end position="232"/>
    </location>
</feature>
<feature type="repeat" description="WD 4">
    <location>
        <begin position="270"/>
        <end position="310"/>
    </location>
</feature>
<feature type="repeat" description="WD 5">
    <location>
        <begin position="312"/>
        <end position="351"/>
    </location>
</feature>
<feature type="repeat" description="WD 6">
    <location>
        <begin position="358"/>
        <end position="398"/>
    </location>
</feature>
<feature type="repeat" description="WD 7">
    <location>
        <begin position="409"/>
        <end position="445"/>
    </location>
</feature>
<feature type="region of interest" description="Ubiquitin-like (UBL) domain" evidence="2">
    <location>
        <begin position="8"/>
        <end position="89"/>
    </location>
</feature>
<feature type="region of interest" description="Sufficient for interaction with ERB1 and association with 66S pre-ribosomes" evidence="1">
    <location>
        <begin position="99"/>
        <end position="445"/>
    </location>
</feature>
<keyword id="KW-0539">Nucleus</keyword>
<keyword id="KW-1185">Reference proteome</keyword>
<keyword id="KW-0677">Repeat</keyword>
<keyword id="KW-0690">Ribosome biogenesis</keyword>
<keyword id="KW-0698">rRNA processing</keyword>
<keyword id="KW-0853">WD repeat</keyword>
<protein>
    <recommendedName>
        <fullName evidence="2">Ribosome biogenesis protein YTM1</fullName>
    </recommendedName>
</protein>
<sequence length="445" mass="49278">MVEDKSQVKVKFFTREQDESLHVLDAPLFAPVSLKRYGLSEIINHLLGLAEPVPFDFLIDGQLLRCSLQDYLTRKGLSSEAVLNVEYTRAVLPPSYLKSFSNEDWVSALDVGAERIVSGSYDGVVRTWNLSGKIEKQYSGHTGAVRAVKFISSTRLVSGGNDRTLRLWKTKNDDVKHVDELEGTEEAHTLAILEGHQAPVVSVDVQGDRILSASYDNSIGFWSTNHKDMTAVDPMDSLGDKASSAAKKRRKLTMKDGSVRRRAPLSLLESHKAPVEQVIFASNDSTVAYSVSQDHTIKTWDLVTSRCVDTKSTSYSLLSMVELPKLRLLACGSSARHITLHDPRADSSAKITQQQLLGHKNFVVALDTCPENEYMLCSASHDGTVKVWDIRSSSSIYTITREDQSVEKGINDKVFAVKWAKGVGIISGGQDKKIQFNKGDNIFKN</sequence>
<reference key="1">
    <citation type="journal article" date="2004" name="Science">
        <title>The Ashbya gossypii genome as a tool for mapping the ancient Saccharomyces cerevisiae genome.</title>
        <authorList>
            <person name="Dietrich F.S."/>
            <person name="Voegeli S."/>
            <person name="Brachat S."/>
            <person name="Lerch A."/>
            <person name="Gates K."/>
            <person name="Steiner S."/>
            <person name="Mohr C."/>
            <person name="Poehlmann R."/>
            <person name="Luedi P."/>
            <person name="Choi S."/>
            <person name="Wing R.A."/>
            <person name="Flavier A."/>
            <person name="Gaffney T.D."/>
            <person name="Philippsen P."/>
        </authorList>
    </citation>
    <scope>NUCLEOTIDE SEQUENCE [LARGE SCALE GENOMIC DNA]</scope>
    <source>
        <strain>ATCC 10895 / CBS 109.51 / FGSC 9923 / NRRL Y-1056</strain>
    </source>
</reference>
<reference key="2">
    <citation type="journal article" date="2013" name="G3 (Bethesda)">
        <title>Genomes of Ashbya fungi isolated from insects reveal four mating-type loci, numerous translocations, lack of transposons, and distinct gene duplications.</title>
        <authorList>
            <person name="Dietrich F.S."/>
            <person name="Voegeli S."/>
            <person name="Kuo S."/>
            <person name="Philippsen P."/>
        </authorList>
    </citation>
    <scope>GENOME REANNOTATION</scope>
    <scope>SEQUENCE REVISION TO 16-20 AND 29-30</scope>
    <source>
        <strain>ATCC 10895 / CBS 109.51 / FGSC 9923 / NRRL Y-1056</strain>
    </source>
</reference>
<evidence type="ECO:0000250" key="1"/>
<evidence type="ECO:0000255" key="2">
    <source>
        <dbReference type="HAMAP-Rule" id="MF_03029"/>
    </source>
</evidence>
<gene>
    <name evidence="2" type="primary">YTM1</name>
    <name type="ordered locus">AER337W</name>
</gene>
<accession>Q756D0</accession>
<proteinExistence type="inferred from homology"/>
<comment type="function">
    <text evidence="2">Component of the NOP7 complex, which is required for maturation of the 25S and 5.8S ribosomal RNAs and formation of the 60S ribosome.</text>
</comment>
<comment type="subunit">
    <text evidence="2">Component of the NOP7 complex, composed of ERB1, NOP7 and YTM1. The complex is held together by ERB1, which interacts with NOP7 via its N-terminal domain and with YTM1 via a high-affinity interaction between the seven-bladed beta-propeller domains of the 2 proteins. The NOP7 complex associates with the 66S pre-ribosome. Interacts (via UBL domain) with MDN1 (via VWFA/MIDAS domain).</text>
</comment>
<comment type="subcellular location">
    <subcellularLocation>
        <location evidence="2">Nucleus</location>
        <location evidence="2">Nucleolus</location>
    </subcellularLocation>
    <subcellularLocation>
        <location evidence="2">Nucleus</location>
        <location evidence="2">Nucleoplasm</location>
    </subcellularLocation>
</comment>
<comment type="similarity">
    <text evidence="2">Belongs to the WD repeat WDR12/YTM1 family.</text>
</comment>
<organism>
    <name type="scientific">Eremothecium gossypii (strain ATCC 10895 / CBS 109.51 / FGSC 9923 / NRRL Y-1056)</name>
    <name type="common">Yeast</name>
    <name type="synonym">Ashbya gossypii</name>
    <dbReference type="NCBI Taxonomy" id="284811"/>
    <lineage>
        <taxon>Eukaryota</taxon>
        <taxon>Fungi</taxon>
        <taxon>Dikarya</taxon>
        <taxon>Ascomycota</taxon>
        <taxon>Saccharomycotina</taxon>
        <taxon>Saccharomycetes</taxon>
        <taxon>Saccharomycetales</taxon>
        <taxon>Saccharomycetaceae</taxon>
        <taxon>Eremothecium</taxon>
    </lineage>
</organism>
<name>YTM1_EREGS</name>
<dbReference type="EMBL" id="AE016818">
    <property type="protein sequence ID" value="AAS53017.2"/>
    <property type="molecule type" value="Genomic_DNA"/>
</dbReference>
<dbReference type="RefSeq" id="NP_985193.2">
    <property type="nucleotide sequence ID" value="NM_210547.2"/>
</dbReference>
<dbReference type="SMR" id="Q756D0"/>
<dbReference type="FunCoup" id="Q756D0">
    <property type="interactions" value="995"/>
</dbReference>
<dbReference type="STRING" id="284811.Q756D0"/>
<dbReference type="EnsemblFungi" id="AAS53017">
    <property type="protein sequence ID" value="AAS53017"/>
    <property type="gene ID" value="AGOS_AER337W"/>
</dbReference>
<dbReference type="GeneID" id="4621407"/>
<dbReference type="KEGG" id="ago:AGOS_AER337W"/>
<dbReference type="eggNOG" id="KOG0313">
    <property type="taxonomic scope" value="Eukaryota"/>
</dbReference>
<dbReference type="HOGENOM" id="CLU_000288_57_0_1"/>
<dbReference type="InParanoid" id="Q756D0"/>
<dbReference type="OMA" id="DHKYVEF"/>
<dbReference type="OrthoDB" id="10251381at2759"/>
<dbReference type="Proteomes" id="UP000000591">
    <property type="component" value="Chromosome V"/>
</dbReference>
<dbReference type="GO" id="GO:0005654">
    <property type="term" value="C:nucleoplasm"/>
    <property type="evidence" value="ECO:0007669"/>
    <property type="project" value="UniProtKB-SubCell"/>
</dbReference>
<dbReference type="GO" id="GO:0070545">
    <property type="term" value="C:PeBoW complex"/>
    <property type="evidence" value="ECO:0000318"/>
    <property type="project" value="GO_Central"/>
</dbReference>
<dbReference type="GO" id="GO:0030687">
    <property type="term" value="C:preribosome, large subunit precursor"/>
    <property type="evidence" value="ECO:0000318"/>
    <property type="project" value="GO_Central"/>
</dbReference>
<dbReference type="GO" id="GO:0043021">
    <property type="term" value="F:ribonucleoprotein complex binding"/>
    <property type="evidence" value="ECO:0007669"/>
    <property type="project" value="UniProtKB-UniRule"/>
</dbReference>
<dbReference type="GO" id="GO:0051276">
    <property type="term" value="P:chromosome organization"/>
    <property type="evidence" value="ECO:0007669"/>
    <property type="project" value="EnsemblFungi"/>
</dbReference>
<dbReference type="GO" id="GO:0000466">
    <property type="term" value="P:maturation of 5.8S rRNA from tricistronic rRNA transcript (SSU-rRNA, 5.8S rRNA, LSU-rRNA)"/>
    <property type="evidence" value="ECO:0007669"/>
    <property type="project" value="UniProtKB-UniRule"/>
</dbReference>
<dbReference type="GO" id="GO:0000463">
    <property type="term" value="P:maturation of LSU-rRNA from tricistronic rRNA transcript (SSU-rRNA, 5.8S rRNA, LSU-rRNA)"/>
    <property type="evidence" value="ECO:0007669"/>
    <property type="project" value="UniProtKB-UniRule"/>
</dbReference>
<dbReference type="GO" id="GO:0110136">
    <property type="term" value="P:protein-RNA complex remodeling"/>
    <property type="evidence" value="ECO:0007669"/>
    <property type="project" value="EnsemblFungi"/>
</dbReference>
<dbReference type="GO" id="GO:0042273">
    <property type="term" value="P:ribosomal large subunit biogenesis"/>
    <property type="evidence" value="ECO:0000318"/>
    <property type="project" value="GO_Central"/>
</dbReference>
<dbReference type="CDD" id="cd00200">
    <property type="entry name" value="WD40"/>
    <property type="match status" value="1"/>
</dbReference>
<dbReference type="FunFam" id="2.130.10.10:FF:000706">
    <property type="entry name" value="Ribosome biogenesis protein YTM1"/>
    <property type="match status" value="1"/>
</dbReference>
<dbReference type="Gene3D" id="2.130.10.10">
    <property type="entry name" value="YVTN repeat-like/Quinoprotein amine dehydrogenase"/>
    <property type="match status" value="1"/>
</dbReference>
<dbReference type="HAMAP" id="MF_03029">
    <property type="entry name" value="WDR12"/>
    <property type="match status" value="1"/>
</dbReference>
<dbReference type="InterPro" id="IPR020472">
    <property type="entry name" value="G-protein_beta_WD-40_rep"/>
</dbReference>
<dbReference type="InterPro" id="IPR012972">
    <property type="entry name" value="NLE"/>
</dbReference>
<dbReference type="InterPro" id="IPR015943">
    <property type="entry name" value="WD40/YVTN_repeat-like_dom_sf"/>
</dbReference>
<dbReference type="InterPro" id="IPR019775">
    <property type="entry name" value="WD40_repeat_CS"/>
</dbReference>
<dbReference type="InterPro" id="IPR036322">
    <property type="entry name" value="WD40_repeat_dom_sf"/>
</dbReference>
<dbReference type="InterPro" id="IPR001680">
    <property type="entry name" value="WD40_rpt"/>
</dbReference>
<dbReference type="InterPro" id="IPR028599">
    <property type="entry name" value="WDR12/Ytm1"/>
</dbReference>
<dbReference type="PANTHER" id="PTHR19855:SF11">
    <property type="entry name" value="RIBOSOME BIOGENESIS PROTEIN WDR12"/>
    <property type="match status" value="1"/>
</dbReference>
<dbReference type="PANTHER" id="PTHR19855">
    <property type="entry name" value="WD40 REPEAT PROTEIN 12, 37"/>
    <property type="match status" value="1"/>
</dbReference>
<dbReference type="Pfam" id="PF08154">
    <property type="entry name" value="NLE"/>
    <property type="match status" value="1"/>
</dbReference>
<dbReference type="Pfam" id="PF00400">
    <property type="entry name" value="WD40"/>
    <property type="match status" value="4"/>
</dbReference>
<dbReference type="PRINTS" id="PR00320">
    <property type="entry name" value="GPROTEINBRPT"/>
</dbReference>
<dbReference type="SMART" id="SM00320">
    <property type="entry name" value="WD40"/>
    <property type="match status" value="7"/>
</dbReference>
<dbReference type="SUPFAM" id="SSF50978">
    <property type="entry name" value="WD40 repeat-like"/>
    <property type="match status" value="1"/>
</dbReference>
<dbReference type="PROSITE" id="PS00678">
    <property type="entry name" value="WD_REPEATS_1"/>
    <property type="match status" value="3"/>
</dbReference>
<dbReference type="PROSITE" id="PS50082">
    <property type="entry name" value="WD_REPEATS_2"/>
    <property type="match status" value="4"/>
</dbReference>
<dbReference type="PROSITE" id="PS50294">
    <property type="entry name" value="WD_REPEATS_REGION"/>
    <property type="match status" value="1"/>
</dbReference>